<accession>Q03WH5</accession>
<dbReference type="EMBL" id="CP000414">
    <property type="protein sequence ID" value="ABJ62447.1"/>
    <property type="molecule type" value="Genomic_DNA"/>
</dbReference>
<dbReference type="RefSeq" id="WP_002815019.1">
    <property type="nucleotide sequence ID" value="NC_008531.1"/>
</dbReference>
<dbReference type="SMR" id="Q03WH5"/>
<dbReference type="EnsemblBacteria" id="ABJ62447">
    <property type="protein sequence ID" value="ABJ62447"/>
    <property type="gene ID" value="LEUM_1354"/>
</dbReference>
<dbReference type="GeneID" id="29576889"/>
<dbReference type="KEGG" id="lme:LEUM_1354"/>
<dbReference type="eggNOG" id="COG0858">
    <property type="taxonomic scope" value="Bacteria"/>
</dbReference>
<dbReference type="HOGENOM" id="CLU_089475_3_0_9"/>
<dbReference type="Proteomes" id="UP000000362">
    <property type="component" value="Chromosome"/>
</dbReference>
<dbReference type="GO" id="GO:0005829">
    <property type="term" value="C:cytosol"/>
    <property type="evidence" value="ECO:0007669"/>
    <property type="project" value="TreeGrafter"/>
</dbReference>
<dbReference type="GO" id="GO:0043024">
    <property type="term" value="F:ribosomal small subunit binding"/>
    <property type="evidence" value="ECO:0007669"/>
    <property type="project" value="TreeGrafter"/>
</dbReference>
<dbReference type="GO" id="GO:0030490">
    <property type="term" value="P:maturation of SSU-rRNA"/>
    <property type="evidence" value="ECO:0007669"/>
    <property type="project" value="UniProtKB-UniRule"/>
</dbReference>
<dbReference type="Gene3D" id="3.30.300.20">
    <property type="match status" value="1"/>
</dbReference>
<dbReference type="HAMAP" id="MF_00003">
    <property type="entry name" value="RbfA"/>
    <property type="match status" value="1"/>
</dbReference>
<dbReference type="InterPro" id="IPR015946">
    <property type="entry name" value="KH_dom-like_a/b"/>
</dbReference>
<dbReference type="InterPro" id="IPR000238">
    <property type="entry name" value="RbfA"/>
</dbReference>
<dbReference type="InterPro" id="IPR023799">
    <property type="entry name" value="RbfA_dom_sf"/>
</dbReference>
<dbReference type="InterPro" id="IPR020053">
    <property type="entry name" value="Ribosome-bd_factorA_CS"/>
</dbReference>
<dbReference type="NCBIfam" id="TIGR00082">
    <property type="entry name" value="rbfA"/>
    <property type="match status" value="1"/>
</dbReference>
<dbReference type="PANTHER" id="PTHR33515">
    <property type="entry name" value="RIBOSOME-BINDING FACTOR A, CHLOROPLASTIC-RELATED"/>
    <property type="match status" value="1"/>
</dbReference>
<dbReference type="PANTHER" id="PTHR33515:SF1">
    <property type="entry name" value="RIBOSOME-BINDING FACTOR A, CHLOROPLASTIC-RELATED"/>
    <property type="match status" value="1"/>
</dbReference>
<dbReference type="Pfam" id="PF02033">
    <property type="entry name" value="RBFA"/>
    <property type="match status" value="1"/>
</dbReference>
<dbReference type="SUPFAM" id="SSF89919">
    <property type="entry name" value="Ribosome-binding factor A, RbfA"/>
    <property type="match status" value="1"/>
</dbReference>
<dbReference type="PROSITE" id="PS01319">
    <property type="entry name" value="RBFA"/>
    <property type="match status" value="1"/>
</dbReference>
<comment type="function">
    <text evidence="1">One of several proteins that assist in the late maturation steps of the functional core of the 30S ribosomal subunit. Associates with free 30S ribosomal subunits (but not with 30S subunits that are part of 70S ribosomes or polysomes). Required for efficient processing of 16S rRNA. May interact with the 5'-terminal helix region of 16S rRNA.</text>
</comment>
<comment type="subunit">
    <text evidence="1">Monomer. Binds 30S ribosomal subunits, but not 50S ribosomal subunits or 70S ribosomes.</text>
</comment>
<comment type="subcellular location">
    <subcellularLocation>
        <location evidence="1">Cytoplasm</location>
    </subcellularLocation>
</comment>
<comment type="similarity">
    <text evidence="1">Belongs to the RbfA family.</text>
</comment>
<evidence type="ECO:0000255" key="1">
    <source>
        <dbReference type="HAMAP-Rule" id="MF_00003"/>
    </source>
</evidence>
<sequence>MANPQRAGRLAQEVQRDVTDLLLKRINDPRVKEVTVTSVELSGDLQIATIYYSILSDLASDAKKTQAGLEAASGLIRKELGSRLTVYKTPELKFVRDTSVQYGNHIEDLIRKLHTEN</sequence>
<gene>
    <name evidence="1" type="primary">rbfA</name>
    <name type="ordered locus">LEUM_1354</name>
</gene>
<name>RBFA_LEUMM</name>
<protein>
    <recommendedName>
        <fullName evidence="1">Ribosome-binding factor A</fullName>
    </recommendedName>
</protein>
<proteinExistence type="inferred from homology"/>
<feature type="chain" id="PRO_1000000134" description="Ribosome-binding factor A">
    <location>
        <begin position="1"/>
        <end position="117"/>
    </location>
</feature>
<keyword id="KW-0963">Cytoplasm</keyword>
<keyword id="KW-1185">Reference proteome</keyword>
<keyword id="KW-0690">Ribosome biogenesis</keyword>
<reference key="1">
    <citation type="journal article" date="2006" name="Proc. Natl. Acad. Sci. U.S.A.">
        <title>Comparative genomics of the lactic acid bacteria.</title>
        <authorList>
            <person name="Makarova K.S."/>
            <person name="Slesarev A."/>
            <person name="Wolf Y.I."/>
            <person name="Sorokin A."/>
            <person name="Mirkin B."/>
            <person name="Koonin E.V."/>
            <person name="Pavlov A."/>
            <person name="Pavlova N."/>
            <person name="Karamychev V."/>
            <person name="Polouchine N."/>
            <person name="Shakhova V."/>
            <person name="Grigoriev I."/>
            <person name="Lou Y."/>
            <person name="Rohksar D."/>
            <person name="Lucas S."/>
            <person name="Huang K."/>
            <person name="Goodstein D.M."/>
            <person name="Hawkins T."/>
            <person name="Plengvidhya V."/>
            <person name="Welker D."/>
            <person name="Hughes J."/>
            <person name="Goh Y."/>
            <person name="Benson A."/>
            <person name="Baldwin K."/>
            <person name="Lee J.-H."/>
            <person name="Diaz-Muniz I."/>
            <person name="Dosti B."/>
            <person name="Smeianov V."/>
            <person name="Wechter W."/>
            <person name="Barabote R."/>
            <person name="Lorca G."/>
            <person name="Altermann E."/>
            <person name="Barrangou R."/>
            <person name="Ganesan B."/>
            <person name="Xie Y."/>
            <person name="Rawsthorne H."/>
            <person name="Tamir D."/>
            <person name="Parker C."/>
            <person name="Breidt F."/>
            <person name="Broadbent J.R."/>
            <person name="Hutkins R."/>
            <person name="O'Sullivan D."/>
            <person name="Steele J."/>
            <person name="Unlu G."/>
            <person name="Saier M.H. Jr."/>
            <person name="Klaenhammer T."/>
            <person name="Richardson P."/>
            <person name="Kozyavkin S."/>
            <person name="Weimer B.C."/>
            <person name="Mills D.A."/>
        </authorList>
    </citation>
    <scope>NUCLEOTIDE SEQUENCE [LARGE SCALE GENOMIC DNA]</scope>
    <source>
        <strain>ATCC 8293 / DSM 20343 / BCRC 11652 / CCM 1803 / JCM 6124 / NCDO 523 / NBRC 100496 / NCIMB 8023 / NCTC 12954 / NRRL B-1118 / 37Y</strain>
    </source>
</reference>
<organism>
    <name type="scientific">Leuconostoc mesenteroides subsp. mesenteroides (strain ATCC 8293 / DSM 20343 / BCRC 11652 / CCM 1803 / JCM 6124 / NCDO 523 / NBRC 100496 / NCIMB 8023 / NCTC 12954 / NRRL B-1118 / 37Y)</name>
    <dbReference type="NCBI Taxonomy" id="203120"/>
    <lineage>
        <taxon>Bacteria</taxon>
        <taxon>Bacillati</taxon>
        <taxon>Bacillota</taxon>
        <taxon>Bacilli</taxon>
        <taxon>Lactobacillales</taxon>
        <taxon>Lactobacillaceae</taxon>
        <taxon>Leuconostoc</taxon>
    </lineage>
</organism>